<feature type="signal peptide" evidence="1">
    <location>
        <begin position="1"/>
        <end position="22"/>
    </location>
</feature>
<feature type="chain" id="PRO_0000012158" description="Beta-glucuronidase">
    <location>
        <begin position="23"/>
        <end position="651"/>
    </location>
</feature>
<feature type="active site" description="Proton donor" evidence="1">
    <location>
        <position position="450"/>
    </location>
</feature>
<feature type="glycosylation site" description="N-linked (GlcNAc...) asparagine" evidence="2">
    <location>
        <position position="172"/>
    </location>
</feature>
<feature type="glycosylation site" description="N-linked (GlcNAc...) asparagine" evidence="2">
    <location>
        <position position="419"/>
    </location>
</feature>
<feature type="glycosylation site" description="N-linked (GlcNAc...) asparagine" evidence="2">
    <location>
        <position position="630"/>
    </location>
</feature>
<feature type="sequence variant" description="In MPS VII; loss of activity." evidence="3">
    <original>R</original>
    <variation>H</variation>
    <location>
        <position position="166"/>
    </location>
</feature>
<dbReference type="EC" id="3.2.1.31"/>
<dbReference type="EMBL" id="AF019759">
    <property type="protein sequence ID" value="AAC48809.1"/>
    <property type="molecule type" value="mRNA"/>
</dbReference>
<dbReference type="RefSeq" id="NP_001003191.1">
    <property type="nucleotide sequence ID" value="NM_001003191.1"/>
</dbReference>
<dbReference type="SMR" id="O18835"/>
<dbReference type="FunCoup" id="O18835">
    <property type="interactions" value="552"/>
</dbReference>
<dbReference type="STRING" id="9615.ENSCAFP00000014967"/>
<dbReference type="CAZy" id="GH2">
    <property type="family name" value="Glycoside Hydrolase Family 2"/>
</dbReference>
<dbReference type="GlyCosmos" id="O18835">
    <property type="glycosylation" value="3 sites, No reported glycans"/>
</dbReference>
<dbReference type="PaxDb" id="9612-ENSCAFP00000014967"/>
<dbReference type="GeneID" id="403831"/>
<dbReference type="KEGG" id="cfa:403831"/>
<dbReference type="CTD" id="2990"/>
<dbReference type="eggNOG" id="KOG2024">
    <property type="taxonomic scope" value="Eukaryota"/>
</dbReference>
<dbReference type="InParanoid" id="O18835"/>
<dbReference type="OrthoDB" id="408532at2759"/>
<dbReference type="Proteomes" id="UP000002254">
    <property type="component" value="Unplaced"/>
</dbReference>
<dbReference type="Proteomes" id="UP000694429">
    <property type="component" value="Unplaced"/>
</dbReference>
<dbReference type="Proteomes" id="UP000694542">
    <property type="component" value="Unplaced"/>
</dbReference>
<dbReference type="Proteomes" id="UP000805418">
    <property type="component" value="Unplaced"/>
</dbReference>
<dbReference type="GO" id="GO:0005615">
    <property type="term" value="C:extracellular space"/>
    <property type="evidence" value="ECO:0000318"/>
    <property type="project" value="GO_Central"/>
</dbReference>
<dbReference type="GO" id="GO:0005764">
    <property type="term" value="C:lysosome"/>
    <property type="evidence" value="ECO:0007669"/>
    <property type="project" value="UniProtKB-SubCell"/>
</dbReference>
<dbReference type="GO" id="GO:0004566">
    <property type="term" value="F:beta-glucuronidase activity"/>
    <property type="evidence" value="ECO:0000318"/>
    <property type="project" value="GO_Central"/>
</dbReference>
<dbReference type="GO" id="GO:0030246">
    <property type="term" value="F:carbohydrate binding"/>
    <property type="evidence" value="ECO:0000318"/>
    <property type="project" value="GO_Central"/>
</dbReference>
<dbReference type="GO" id="GO:0005102">
    <property type="term" value="F:signaling receptor binding"/>
    <property type="evidence" value="ECO:0000318"/>
    <property type="project" value="GO_Central"/>
</dbReference>
<dbReference type="GO" id="GO:0005975">
    <property type="term" value="P:carbohydrate metabolic process"/>
    <property type="evidence" value="ECO:0007669"/>
    <property type="project" value="InterPro"/>
</dbReference>
<dbReference type="FunFam" id="2.60.120.260:FF:000027">
    <property type="entry name" value="Beta-glucuronidase"/>
    <property type="match status" value="1"/>
</dbReference>
<dbReference type="FunFam" id="2.60.40.10:FF:000628">
    <property type="entry name" value="Beta-glucuronidase"/>
    <property type="match status" value="1"/>
</dbReference>
<dbReference type="FunFam" id="3.20.20.80:FF:000029">
    <property type="entry name" value="Beta-glucuronidase"/>
    <property type="match status" value="1"/>
</dbReference>
<dbReference type="Gene3D" id="2.60.120.260">
    <property type="entry name" value="Galactose-binding domain-like"/>
    <property type="match status" value="1"/>
</dbReference>
<dbReference type="Gene3D" id="3.20.20.80">
    <property type="entry name" value="Glycosidases"/>
    <property type="match status" value="1"/>
</dbReference>
<dbReference type="Gene3D" id="2.60.40.10">
    <property type="entry name" value="Immunoglobulins"/>
    <property type="match status" value="1"/>
</dbReference>
<dbReference type="InterPro" id="IPR036156">
    <property type="entry name" value="Beta-gal/glucu_dom_sf"/>
</dbReference>
<dbReference type="InterPro" id="IPR008979">
    <property type="entry name" value="Galactose-bd-like_sf"/>
</dbReference>
<dbReference type="InterPro" id="IPR006101">
    <property type="entry name" value="Glyco_hydro_2"/>
</dbReference>
<dbReference type="InterPro" id="IPR023232">
    <property type="entry name" value="Glyco_hydro_2_AS"/>
</dbReference>
<dbReference type="InterPro" id="IPR006103">
    <property type="entry name" value="Glyco_hydro_2_cat"/>
</dbReference>
<dbReference type="InterPro" id="IPR023230">
    <property type="entry name" value="Glyco_hydro_2_CS"/>
</dbReference>
<dbReference type="InterPro" id="IPR006102">
    <property type="entry name" value="Glyco_hydro_2_Ig-like"/>
</dbReference>
<dbReference type="InterPro" id="IPR006104">
    <property type="entry name" value="Glyco_hydro_2_N"/>
</dbReference>
<dbReference type="InterPro" id="IPR017853">
    <property type="entry name" value="Glycoside_hydrolase_SF"/>
</dbReference>
<dbReference type="InterPro" id="IPR013783">
    <property type="entry name" value="Ig-like_fold"/>
</dbReference>
<dbReference type="NCBIfam" id="NF007538">
    <property type="entry name" value="PRK10150.1"/>
    <property type="match status" value="1"/>
</dbReference>
<dbReference type="PANTHER" id="PTHR10066">
    <property type="entry name" value="BETA-GLUCURONIDASE"/>
    <property type="match status" value="1"/>
</dbReference>
<dbReference type="PANTHER" id="PTHR10066:SF67">
    <property type="entry name" value="BETA-GLUCURONIDASE"/>
    <property type="match status" value="1"/>
</dbReference>
<dbReference type="Pfam" id="PF00703">
    <property type="entry name" value="Glyco_hydro_2"/>
    <property type="match status" value="1"/>
</dbReference>
<dbReference type="Pfam" id="PF02836">
    <property type="entry name" value="Glyco_hydro_2_C"/>
    <property type="match status" value="1"/>
</dbReference>
<dbReference type="Pfam" id="PF02837">
    <property type="entry name" value="Glyco_hydro_2_N"/>
    <property type="match status" value="1"/>
</dbReference>
<dbReference type="PRINTS" id="PR00132">
    <property type="entry name" value="GLHYDRLASE2"/>
</dbReference>
<dbReference type="SUPFAM" id="SSF51445">
    <property type="entry name" value="(Trans)glycosidases"/>
    <property type="match status" value="1"/>
</dbReference>
<dbReference type="SUPFAM" id="SSF49303">
    <property type="entry name" value="beta-Galactosidase/glucuronidase domain"/>
    <property type="match status" value="1"/>
</dbReference>
<dbReference type="SUPFAM" id="SSF49785">
    <property type="entry name" value="Galactose-binding domain-like"/>
    <property type="match status" value="1"/>
</dbReference>
<dbReference type="PROSITE" id="PS00719">
    <property type="entry name" value="GLYCOSYL_HYDROL_F2_1"/>
    <property type="match status" value="1"/>
</dbReference>
<dbReference type="PROSITE" id="PS00608">
    <property type="entry name" value="GLYCOSYL_HYDROL_F2_2"/>
    <property type="match status" value="1"/>
</dbReference>
<accession>O18835</accession>
<name>BGLR_CANLF</name>
<reference key="1">
    <citation type="journal article" date="1998" name="Genomics">
        <title>Cloning of the canine beta-glucuronidase cDNA, mutation identification in canine MPS VII, and retroviral vector-mediated correction of MPS VII cells.</title>
        <authorList>
            <person name="Ray J."/>
            <person name="Bouvet A."/>
            <person name="Desanto C."/>
            <person name="Fyfe J.C."/>
            <person name="Xu D."/>
            <person name="Wolfe J.H."/>
            <person name="Aguirre G.D."/>
            <person name="Patterson D.F."/>
            <person name="Haskins M.E."/>
            <person name="Henthorn P.S."/>
        </authorList>
    </citation>
    <scope>NUCLEOTIDE SEQUENCE [MRNA]</scope>
    <scope>VARIANT MPS VII HIS-166</scope>
    <scope>DISEASE</scope>
</reference>
<organism>
    <name type="scientific">Canis lupus familiaris</name>
    <name type="common">Dog</name>
    <name type="synonym">Canis familiaris</name>
    <dbReference type="NCBI Taxonomy" id="9615"/>
    <lineage>
        <taxon>Eukaryota</taxon>
        <taxon>Metazoa</taxon>
        <taxon>Chordata</taxon>
        <taxon>Craniata</taxon>
        <taxon>Vertebrata</taxon>
        <taxon>Euteleostomi</taxon>
        <taxon>Mammalia</taxon>
        <taxon>Eutheria</taxon>
        <taxon>Laurasiatheria</taxon>
        <taxon>Carnivora</taxon>
        <taxon>Caniformia</taxon>
        <taxon>Canidae</taxon>
        <taxon>Canis</taxon>
    </lineage>
</organism>
<proteinExistence type="evidence at protein level"/>
<comment type="function">
    <text evidence="1">Plays an important role in the degradation of dermatan and keratan sulfates.</text>
</comment>
<comment type="catalytic activity">
    <reaction>
        <text>a beta-D-glucuronoside + H2O = D-glucuronate + an alcohol</text>
        <dbReference type="Rhea" id="RHEA:17633"/>
        <dbReference type="ChEBI" id="CHEBI:15377"/>
        <dbReference type="ChEBI" id="CHEBI:30879"/>
        <dbReference type="ChEBI" id="CHEBI:58720"/>
        <dbReference type="ChEBI" id="CHEBI:83411"/>
        <dbReference type="EC" id="3.2.1.31"/>
    </reaction>
</comment>
<comment type="activity regulation">
    <text evidence="1">Inhibited by L-aspartic acid.</text>
</comment>
<comment type="subunit">
    <text evidence="1">Homotetramer.</text>
</comment>
<comment type="subcellular location">
    <subcellularLocation>
        <location>Lysosome</location>
    </subcellularLocation>
</comment>
<comment type="disease">
    <text evidence="3">Defects in GUSB are the cause of mucopolysaccharidosis type VII (MPS VII), an inherited disease reported in humans, mice, cats, and dogs.</text>
</comment>
<comment type="similarity">
    <text evidence="4">Belongs to the glycosyl hydrolase 2 family.</text>
</comment>
<gene>
    <name type="primary">GUSB</name>
</gene>
<sequence>MSRGPAGAWVALGPLLWTCGLALEGGMLYPRESPSRERKDLDGLWSFRADFSDGRRQGFEQQWYRAPLRESGPTLDMPVPSSFNDVGQDRQLRSFVGWVWYEREATLPRRWSQDPGTRVVLRIGSAHYYAIVWVNGVHVAEHEGGHLPFEADISKLVQSGPLSSCRITLAINNTLTPHTLPPGTIVYKTDASKYPKGYFVQNTYFDFFNYAGLHRPVLLYTTPTTYIDDITVTTGVDQDTGLVDYQIFVQGSEHFQLEVYLLDEEGKVVAQGTGSQGRLQVPNVHLWWPYLMHEHPAYLYSLEVRLTAQMAAGPVSDFYTLPVGIRTVAVTERQFLINGKPFYFHGVNKHEDADIRGKGFDWPLLVKDFNLLRWLGANAFRTSHYPYAEEVMQLCDRYGIVVIDESPGVGIMLVQSYSNVSLQHHLEVMGELVRRDKNHPSVVMWSVANEPTSFLKPAAYYFKTLIAHTKALDPSRPVTFVTNSNYEADLGAPYVDVICVNSYYSWYHDYGHMEVIQLQLATEFENWYRTYQKPIIQSEYGAETIAGFHQDPPLMFSEEYQKGLLEQYHLVLDQKRKEYVVGELIWNFADFMTDQSPQRAVGNRKGIFTRQRQPKAAAFLLRERYWKLANETGHHRSAAKSQCLENSPFAL</sequence>
<protein>
    <recommendedName>
        <fullName>Beta-glucuronidase</fullName>
        <ecNumber>3.2.1.31</ecNumber>
    </recommendedName>
</protein>
<evidence type="ECO:0000250" key="1"/>
<evidence type="ECO:0000255" key="2"/>
<evidence type="ECO:0000269" key="3">
    <source>
    </source>
</evidence>
<evidence type="ECO:0000305" key="4"/>
<keyword id="KW-0225">Disease variant</keyword>
<keyword id="KW-0325">Glycoprotein</keyword>
<keyword id="KW-0326">Glycosidase</keyword>
<keyword id="KW-0378">Hydrolase</keyword>
<keyword id="KW-0458">Lysosome</keyword>
<keyword id="KW-1185">Reference proteome</keyword>
<keyword id="KW-0732">Signal</keyword>